<feature type="chain" id="PRO_0000186627" description="PTS system mannitol-specific EIICB component">
    <location>
        <begin position="1"/>
        <end position="519"/>
    </location>
</feature>
<feature type="topological domain" description="Cytoplasmic" evidence="1">
    <location>
        <begin position="1"/>
        <end position="30"/>
    </location>
</feature>
<feature type="transmembrane region" description="Helical" evidence="1">
    <location>
        <begin position="31"/>
        <end position="52"/>
    </location>
</feature>
<feature type="topological domain" description="Extracellular" evidence="1">
    <location>
        <begin position="53"/>
        <end position="56"/>
    </location>
</feature>
<feature type="transmembrane region" description="Helical" evidence="1">
    <location>
        <begin position="57"/>
        <end position="77"/>
    </location>
</feature>
<feature type="topological domain" description="Cytoplasmic" evidence="1">
    <location>
        <begin position="78"/>
        <end position="141"/>
    </location>
</feature>
<feature type="transmembrane region" description="Helical" evidence="1">
    <location>
        <begin position="142"/>
        <end position="163"/>
    </location>
</feature>
<feature type="topological domain" description="Extracellular" evidence="1">
    <location>
        <begin position="164"/>
        <end position="172"/>
    </location>
</feature>
<feature type="transmembrane region" description="Helical" evidence="1">
    <location>
        <begin position="173"/>
        <end position="193"/>
    </location>
</feature>
<feature type="topological domain" description="Cytoplasmic" evidence="1">
    <location>
        <begin position="194"/>
        <end position="280"/>
    </location>
</feature>
<feature type="transmembrane region" description="Helical" evidence="1">
    <location>
        <begin position="281"/>
        <end position="300"/>
    </location>
</feature>
<feature type="topological domain" description="Extracellular" evidence="1">
    <location>
        <begin position="301"/>
        <end position="320"/>
    </location>
</feature>
<feature type="transmembrane region" description="Helical" evidence="1">
    <location>
        <begin position="321"/>
        <end position="342"/>
    </location>
</feature>
<feature type="topological domain" description="Cytoplasmic" evidence="1">
    <location>
        <begin position="343"/>
        <end position="519"/>
    </location>
</feature>
<feature type="domain" description="PTS EIIC type-2" evidence="4">
    <location>
        <begin position="19"/>
        <end position="351"/>
    </location>
</feature>
<feature type="domain" description="PTS EIIB type-2" evidence="3">
    <location>
        <begin position="425"/>
        <end position="519"/>
    </location>
</feature>
<feature type="region of interest" description="Disordered" evidence="5">
    <location>
        <begin position="366"/>
        <end position="406"/>
    </location>
</feature>
<feature type="compositionally biased region" description="Low complexity" evidence="5">
    <location>
        <begin position="367"/>
        <end position="387"/>
    </location>
</feature>
<feature type="compositionally biased region" description="Acidic residues" evidence="5">
    <location>
        <begin position="394"/>
        <end position="406"/>
    </location>
</feature>
<feature type="active site" description="Phosphocysteine intermediate; for EIIB activity" evidence="1 2">
    <location>
        <position position="431"/>
    </location>
</feature>
<feature type="modified residue" description="Phosphocysteine; by EIIA" evidence="1 2 3">
    <location>
        <position position="431"/>
    </location>
</feature>
<dbReference type="EC" id="2.7.1.197" evidence="1 2"/>
<dbReference type="EMBL" id="AP006716">
    <property type="protein sequence ID" value="BAE03544.1"/>
    <property type="molecule type" value="Genomic_DNA"/>
</dbReference>
<dbReference type="RefSeq" id="WP_011274564.1">
    <property type="nucleotide sequence ID" value="NC_007168.1"/>
</dbReference>
<dbReference type="SMR" id="Q4L9Y1"/>
<dbReference type="KEGG" id="sha:SH0235"/>
<dbReference type="eggNOG" id="COG2213">
    <property type="taxonomic scope" value="Bacteria"/>
</dbReference>
<dbReference type="HOGENOM" id="CLU_028721_2_0_9"/>
<dbReference type="OrthoDB" id="9814222at2"/>
<dbReference type="Proteomes" id="UP000000543">
    <property type="component" value="Chromosome"/>
</dbReference>
<dbReference type="GO" id="GO:0005886">
    <property type="term" value="C:plasma membrane"/>
    <property type="evidence" value="ECO:0007669"/>
    <property type="project" value="UniProtKB-SubCell"/>
</dbReference>
<dbReference type="GO" id="GO:0016301">
    <property type="term" value="F:kinase activity"/>
    <property type="evidence" value="ECO:0007669"/>
    <property type="project" value="UniProtKB-KW"/>
</dbReference>
<dbReference type="GO" id="GO:0022872">
    <property type="term" value="F:protein-N(PI)-phosphohistidine-mannitol phosphotransferase system transmembrane transporter activity"/>
    <property type="evidence" value="ECO:0007669"/>
    <property type="project" value="InterPro"/>
</dbReference>
<dbReference type="GO" id="GO:0090563">
    <property type="term" value="F:protein-phosphocysteine-sugar phosphotransferase activity"/>
    <property type="evidence" value="ECO:0007669"/>
    <property type="project" value="TreeGrafter"/>
</dbReference>
<dbReference type="GO" id="GO:0009401">
    <property type="term" value="P:phosphoenolpyruvate-dependent sugar phosphotransferase system"/>
    <property type="evidence" value="ECO:0007669"/>
    <property type="project" value="UniProtKB-KW"/>
</dbReference>
<dbReference type="CDD" id="cd05567">
    <property type="entry name" value="PTS_IIB_mannitol"/>
    <property type="match status" value="1"/>
</dbReference>
<dbReference type="FunFam" id="3.40.50.2300:FF:000047">
    <property type="entry name" value="PTS system mannitol-specific transporter subunit IICBA"/>
    <property type="match status" value="1"/>
</dbReference>
<dbReference type="Gene3D" id="3.40.50.2300">
    <property type="match status" value="1"/>
</dbReference>
<dbReference type="InterPro" id="IPR036095">
    <property type="entry name" value="PTS_EIIB-like_sf"/>
</dbReference>
<dbReference type="InterPro" id="IPR013011">
    <property type="entry name" value="PTS_EIIB_2"/>
</dbReference>
<dbReference type="InterPro" id="IPR003501">
    <property type="entry name" value="PTS_EIIB_2/3"/>
</dbReference>
<dbReference type="InterPro" id="IPR029503">
    <property type="entry name" value="PTS_EIIB_mannitol"/>
</dbReference>
<dbReference type="InterPro" id="IPR003352">
    <property type="entry name" value="PTS_EIIC"/>
</dbReference>
<dbReference type="InterPro" id="IPR013014">
    <property type="entry name" value="PTS_EIIC_2"/>
</dbReference>
<dbReference type="InterPro" id="IPR004718">
    <property type="entry name" value="PTS_IIC_mtl"/>
</dbReference>
<dbReference type="InterPro" id="IPR050893">
    <property type="entry name" value="Sugar_PTS"/>
</dbReference>
<dbReference type="NCBIfam" id="TIGR00851">
    <property type="entry name" value="mtlA"/>
    <property type="match status" value="1"/>
</dbReference>
<dbReference type="PANTHER" id="PTHR30181">
    <property type="entry name" value="MANNITOL PERMEASE IIC COMPONENT"/>
    <property type="match status" value="1"/>
</dbReference>
<dbReference type="PANTHER" id="PTHR30181:SF2">
    <property type="entry name" value="PTS SYSTEM MANNITOL-SPECIFIC EIICBA COMPONENT"/>
    <property type="match status" value="1"/>
</dbReference>
<dbReference type="Pfam" id="PF02378">
    <property type="entry name" value="PTS_EIIC"/>
    <property type="match status" value="1"/>
</dbReference>
<dbReference type="Pfam" id="PF02302">
    <property type="entry name" value="PTS_IIB"/>
    <property type="match status" value="1"/>
</dbReference>
<dbReference type="SUPFAM" id="SSF52794">
    <property type="entry name" value="PTS system IIB component-like"/>
    <property type="match status" value="1"/>
</dbReference>
<dbReference type="PROSITE" id="PS51099">
    <property type="entry name" value="PTS_EIIB_TYPE_2"/>
    <property type="match status" value="1"/>
</dbReference>
<dbReference type="PROSITE" id="PS51104">
    <property type="entry name" value="PTS_EIIC_TYPE_2"/>
    <property type="match status" value="1"/>
</dbReference>
<sequence>MAQTETQEKKGLGRKVQAFGSFLSSMIMPNIGAFIAWGFIAAIFIDNGWYPNKELSQLAGPMITYLIPLLIAFSGGRLIHDLRGGIVAATATMGVIVALPDTPMLLGAMIMGPLVGWLMKKVDQFLQPRTPQGFEMLFNNFSAGILAFIMTILGFKLLAPIMQFIMHILSVAVEFLVHLHLLPIVSIIVEPAKILFLNNAINHGVFTPLGTDQAASAGQSILFAIESNPGPGIGILLAYMIFGKGTAKATSYGAGIIHFFGGIHEIYFPYVLMRPLLFIAVILGGMTGVATYQATGFGFKSPASPGSFIVYCLNAPKGEFLHMVLGVFLAALVSFVVAALIMKFTKEPKQDLEAATAKMESTKGKKSSVSSKLTGATTGTGAAGVAANKANGEDQNEASSEDEEEDLLDNYNTEDVDAHDYSNVDHVIFACDAGMGSSAMGASMLRNKFKKAGISDVNVTNTAINQLPNNAQLVITQKTLTDRAIKQVPNAIHISVDNFLNSPRYEELLNNLKKDQDKA</sequence>
<protein>
    <recommendedName>
        <fullName evidence="2">PTS system mannitol-specific EIICB component</fullName>
    </recommendedName>
    <alternativeName>
        <fullName evidence="2">EIICB-Mtl</fullName>
        <shortName evidence="2">EII-Mtl</shortName>
    </alternativeName>
    <domain>
        <recommendedName>
            <fullName evidence="2">Mannitol permease IIC component</fullName>
        </recommendedName>
        <alternativeName>
            <fullName evidence="2">PTS system mannitol-specific EIIC component</fullName>
        </alternativeName>
    </domain>
    <domain>
        <recommendedName>
            <fullName evidence="2">Mannitol-specific phosphotransferase enzyme IIB component</fullName>
            <ecNumber evidence="1 2">2.7.1.197</ecNumber>
        </recommendedName>
        <alternativeName>
            <fullName evidence="2">PTS system mannitol-specific EIIB component</fullName>
        </alternativeName>
    </domain>
</protein>
<gene>
    <name type="primary">mtlA</name>
    <name type="ordered locus">SH0235</name>
</gene>
<evidence type="ECO:0000250" key="1">
    <source>
        <dbReference type="UniProtKB" id="P00550"/>
    </source>
</evidence>
<evidence type="ECO:0000250" key="2">
    <source>
        <dbReference type="UniProtKB" id="P28008"/>
    </source>
</evidence>
<evidence type="ECO:0000255" key="3">
    <source>
        <dbReference type="PROSITE-ProRule" id="PRU00422"/>
    </source>
</evidence>
<evidence type="ECO:0000255" key="4">
    <source>
        <dbReference type="PROSITE-ProRule" id="PRU00427"/>
    </source>
</evidence>
<evidence type="ECO:0000256" key="5">
    <source>
        <dbReference type="SAM" id="MobiDB-lite"/>
    </source>
</evidence>
<keyword id="KW-1003">Cell membrane</keyword>
<keyword id="KW-0418">Kinase</keyword>
<keyword id="KW-0472">Membrane</keyword>
<keyword id="KW-0597">Phosphoprotein</keyword>
<keyword id="KW-0598">Phosphotransferase system</keyword>
<keyword id="KW-0762">Sugar transport</keyword>
<keyword id="KW-0808">Transferase</keyword>
<keyword id="KW-0812">Transmembrane</keyword>
<keyword id="KW-1133">Transmembrane helix</keyword>
<keyword id="KW-0813">Transport</keyword>
<proteinExistence type="inferred from homology"/>
<reference key="1">
    <citation type="journal article" date="2005" name="J. Bacteriol.">
        <title>Whole-genome sequencing of Staphylococcus haemolyticus uncovers the extreme plasticity of its genome and the evolution of human-colonizing staphylococcal species.</title>
        <authorList>
            <person name="Takeuchi F."/>
            <person name="Watanabe S."/>
            <person name="Baba T."/>
            <person name="Yuzawa H."/>
            <person name="Ito T."/>
            <person name="Morimoto Y."/>
            <person name="Kuroda M."/>
            <person name="Cui L."/>
            <person name="Takahashi M."/>
            <person name="Ankai A."/>
            <person name="Baba S."/>
            <person name="Fukui S."/>
            <person name="Lee J.C."/>
            <person name="Hiramatsu K."/>
        </authorList>
    </citation>
    <scope>NUCLEOTIDE SEQUENCE [LARGE SCALE GENOMIC DNA]</scope>
    <source>
        <strain>JCSC1435</strain>
    </source>
</reference>
<comment type="function">
    <text evidence="2">The phosphoenolpyruvate-dependent sugar phosphotransferase system (sugar PTS), a major carbohydrate active transport system, catalyzes the phosphorylation of incoming sugar substrates concomitantly with their translocation across the cell membrane. The enzyme II CmtAB PTS system is involved in D-mannitol transport.</text>
</comment>
<comment type="catalytic activity">
    <reaction evidence="1 2">
        <text>D-mannitol(out) + N(pros)-phospho-L-histidyl-[protein] = D-mannitol 1-phosphate(in) + L-histidyl-[protein]</text>
        <dbReference type="Rhea" id="RHEA:33363"/>
        <dbReference type="Rhea" id="RHEA-COMP:9745"/>
        <dbReference type="Rhea" id="RHEA-COMP:9746"/>
        <dbReference type="ChEBI" id="CHEBI:16899"/>
        <dbReference type="ChEBI" id="CHEBI:29979"/>
        <dbReference type="ChEBI" id="CHEBI:61381"/>
        <dbReference type="ChEBI" id="CHEBI:64837"/>
        <dbReference type="EC" id="2.7.1.197"/>
    </reaction>
</comment>
<comment type="subunit">
    <text evidence="2">Homodimer.</text>
</comment>
<comment type="subcellular location">
    <subcellularLocation>
        <location evidence="4">Cell membrane</location>
        <topology evidence="4">Multi-pass membrane protein</topology>
    </subcellularLocation>
</comment>
<comment type="domain">
    <text evidence="4">The EIIC type-2 domain forms the PTS system translocation channel and contains the specific substrate-binding site.</text>
</comment>
<comment type="domain">
    <text evidence="3">The PTS EIIB type-2 domain is phosphorylated by phospho-EIIA on a cysteinyl residue. Then, it transfers the phosphoryl group to the sugar substrate concomitantly with the sugar uptake processed by the PTS EIIC type-2 domain.</text>
</comment>
<organism>
    <name type="scientific">Staphylococcus haemolyticus (strain JCSC1435)</name>
    <dbReference type="NCBI Taxonomy" id="279808"/>
    <lineage>
        <taxon>Bacteria</taxon>
        <taxon>Bacillati</taxon>
        <taxon>Bacillota</taxon>
        <taxon>Bacilli</taxon>
        <taxon>Bacillales</taxon>
        <taxon>Staphylococcaceae</taxon>
        <taxon>Staphylococcus</taxon>
    </lineage>
</organism>
<accession>Q4L9Y1</accession>
<name>PTMCB_STAHJ</name>